<dbReference type="EMBL" id="L77117">
    <property type="protein sequence ID" value="AAB99594.1"/>
    <property type="molecule type" value="Genomic_DNA"/>
</dbReference>
<dbReference type="PIR" id="A64496">
    <property type="entry name" value="A64496"/>
</dbReference>
<dbReference type="RefSeq" id="WP_010871094.1">
    <property type="nucleotide sequence ID" value="NC_000909.1"/>
</dbReference>
<dbReference type="STRING" id="243232.MJ_1570"/>
<dbReference type="PaxDb" id="243232-MJ_1570"/>
<dbReference type="EnsemblBacteria" id="AAB99594">
    <property type="protein sequence ID" value="AAB99594"/>
    <property type="gene ID" value="MJ_1570"/>
</dbReference>
<dbReference type="GeneID" id="1452478"/>
<dbReference type="KEGG" id="mja:MJ_1570"/>
<dbReference type="eggNOG" id="arCOG03159">
    <property type="taxonomic scope" value="Archaea"/>
</dbReference>
<dbReference type="HOGENOM" id="CLU_174500_0_0_2"/>
<dbReference type="InParanoid" id="Q58965"/>
<dbReference type="OrthoDB" id="88314at2157"/>
<dbReference type="PhylomeDB" id="Q58965"/>
<dbReference type="Proteomes" id="UP000000805">
    <property type="component" value="Chromosome"/>
</dbReference>
<dbReference type="GO" id="GO:0005886">
    <property type="term" value="C:plasma membrane"/>
    <property type="evidence" value="ECO:0007669"/>
    <property type="project" value="UniProtKB-SubCell"/>
</dbReference>
<dbReference type="InterPro" id="IPR025937">
    <property type="entry name" value="PDGLE_dom"/>
</dbReference>
<dbReference type="Pfam" id="PF13190">
    <property type="entry name" value="PDGLE"/>
    <property type="match status" value="1"/>
</dbReference>
<comment type="subcellular location">
    <subcellularLocation>
        <location evidence="2">Cell membrane</location>
        <topology evidence="2">Multi-pass membrane protein</topology>
    </subcellularLocation>
</comment>
<comment type="similarity">
    <text evidence="2">To M.thermoautotrophicum MTH1706.</text>
</comment>
<evidence type="ECO:0000255" key="1"/>
<evidence type="ECO:0000305" key="2"/>
<accession>Q58965</accession>
<proteinExistence type="predicted"/>
<feature type="chain" id="PRO_0000107417" description="Uncharacterized protein MJ1570">
    <location>
        <begin position="1"/>
        <end position="115"/>
    </location>
</feature>
<feature type="transmembrane region" description="Helical" evidence="1">
    <location>
        <begin position="11"/>
        <end position="31"/>
    </location>
</feature>
<feature type="transmembrane region" description="Helical" evidence="1">
    <location>
        <begin position="85"/>
        <end position="105"/>
    </location>
</feature>
<name>Y1570_METJA</name>
<protein>
    <recommendedName>
        <fullName>Uncharacterized protein MJ1570</fullName>
    </recommendedName>
</protein>
<organism>
    <name type="scientific">Methanocaldococcus jannaschii (strain ATCC 43067 / DSM 2661 / JAL-1 / JCM 10045 / NBRC 100440)</name>
    <name type="common">Methanococcus jannaschii</name>
    <dbReference type="NCBI Taxonomy" id="243232"/>
    <lineage>
        <taxon>Archaea</taxon>
        <taxon>Methanobacteriati</taxon>
        <taxon>Methanobacteriota</taxon>
        <taxon>Methanomada group</taxon>
        <taxon>Methanococci</taxon>
        <taxon>Methanococcales</taxon>
        <taxon>Methanocaldococcaceae</taxon>
        <taxon>Methanocaldococcus</taxon>
    </lineage>
</organism>
<keyword id="KW-1003">Cell membrane</keyword>
<keyword id="KW-0472">Membrane</keyword>
<keyword id="KW-1185">Reference proteome</keyword>
<keyword id="KW-0812">Transmembrane</keyword>
<keyword id="KW-1133">Transmembrane helix</keyword>
<reference key="1">
    <citation type="journal article" date="1996" name="Science">
        <title>Complete genome sequence of the methanogenic archaeon, Methanococcus jannaschii.</title>
        <authorList>
            <person name="Bult C.J."/>
            <person name="White O."/>
            <person name="Olsen G.J."/>
            <person name="Zhou L."/>
            <person name="Fleischmann R.D."/>
            <person name="Sutton G.G."/>
            <person name="Blake J.A."/>
            <person name="FitzGerald L.M."/>
            <person name="Clayton R.A."/>
            <person name="Gocayne J.D."/>
            <person name="Kerlavage A.R."/>
            <person name="Dougherty B.A."/>
            <person name="Tomb J.-F."/>
            <person name="Adams M.D."/>
            <person name="Reich C.I."/>
            <person name="Overbeek R."/>
            <person name="Kirkness E.F."/>
            <person name="Weinstock K.G."/>
            <person name="Merrick J.M."/>
            <person name="Glodek A."/>
            <person name="Scott J.L."/>
            <person name="Geoghagen N.S.M."/>
            <person name="Weidman J.F."/>
            <person name="Fuhrmann J.L."/>
            <person name="Nguyen D."/>
            <person name="Utterback T.R."/>
            <person name="Kelley J.M."/>
            <person name="Peterson J.D."/>
            <person name="Sadow P.W."/>
            <person name="Hanna M.C."/>
            <person name="Cotton M.D."/>
            <person name="Roberts K.M."/>
            <person name="Hurst M.A."/>
            <person name="Kaine B.P."/>
            <person name="Borodovsky M."/>
            <person name="Klenk H.-P."/>
            <person name="Fraser C.M."/>
            <person name="Smith H.O."/>
            <person name="Woese C.R."/>
            <person name="Venter J.C."/>
        </authorList>
    </citation>
    <scope>NUCLEOTIDE SEQUENCE [LARGE SCALE GENOMIC DNA]</scope>
    <source>
        <strain>ATCC 43067 / DSM 2661 / JAL-1 / JCM 10045 / NBRC 100440</strain>
    </source>
</reference>
<sequence length="115" mass="12632">MNWQDPLVKKFLYLIVAMVILCPLGILLVWNYGDAWGEWGPEDVAEKVGEDKVSGLLHLADIWSYAPLPDYDIPGWDDPFHASIGYIISAIVGVILCVGAYYALIKIVNPKAAAG</sequence>
<gene>
    <name type="ordered locus">MJ1570</name>
</gene>